<accession>Q0ATU3</accession>
<gene>
    <name type="ordered locus">Swol_2575</name>
</gene>
<protein>
    <recommendedName>
        <fullName evidence="1">Putative membrane protein insertion efficiency factor</fullName>
    </recommendedName>
</protein>
<organism>
    <name type="scientific">Syntrophomonas wolfei subsp. wolfei (strain DSM 2245B / Goettingen)</name>
    <dbReference type="NCBI Taxonomy" id="335541"/>
    <lineage>
        <taxon>Bacteria</taxon>
        <taxon>Bacillati</taxon>
        <taxon>Bacillota</taxon>
        <taxon>Clostridia</taxon>
        <taxon>Eubacteriales</taxon>
        <taxon>Syntrophomonadaceae</taxon>
        <taxon>Syntrophomonas</taxon>
    </lineage>
</organism>
<reference key="1">
    <citation type="journal article" date="2010" name="Environ. Microbiol.">
        <title>The genome of Syntrophomonas wolfei: new insights into syntrophic metabolism and biohydrogen production.</title>
        <authorList>
            <person name="Sieber J.R."/>
            <person name="Sims D.R."/>
            <person name="Han C."/>
            <person name="Kim E."/>
            <person name="Lykidis A."/>
            <person name="Lapidus A.L."/>
            <person name="McDonnald E."/>
            <person name="Rohlin L."/>
            <person name="Culley D.E."/>
            <person name="Gunsalus R."/>
            <person name="McInerney M.J."/>
        </authorList>
    </citation>
    <scope>NUCLEOTIDE SEQUENCE [LARGE SCALE GENOMIC DNA]</scope>
    <source>
        <strain>DSM 2245B / Goettingen</strain>
    </source>
</reference>
<name>YIDD_SYNWW</name>
<feature type="chain" id="PRO_1000080203" description="Putative membrane protein insertion efficiency factor">
    <location>
        <begin position="1"/>
        <end position="68"/>
    </location>
</feature>
<comment type="function">
    <text evidence="1">Could be involved in insertion of integral membrane proteins into the membrane.</text>
</comment>
<comment type="subcellular location">
    <subcellularLocation>
        <location evidence="1">Cell membrane</location>
        <topology evidence="1">Peripheral membrane protein</topology>
        <orientation evidence="1">Cytoplasmic side</orientation>
    </subcellularLocation>
</comment>
<comment type="similarity">
    <text evidence="1">Belongs to the UPF0161 family.</text>
</comment>
<proteinExistence type="inferred from homology"/>
<dbReference type="EMBL" id="CP000448">
    <property type="protein sequence ID" value="ABI69861.1"/>
    <property type="molecule type" value="Genomic_DNA"/>
</dbReference>
<dbReference type="STRING" id="335541.Swol_2575"/>
<dbReference type="KEGG" id="swo:Swol_2575"/>
<dbReference type="eggNOG" id="COG0759">
    <property type="taxonomic scope" value="Bacteria"/>
</dbReference>
<dbReference type="HOGENOM" id="CLU_144811_6_0_9"/>
<dbReference type="OrthoDB" id="9801753at2"/>
<dbReference type="Proteomes" id="UP000001968">
    <property type="component" value="Chromosome"/>
</dbReference>
<dbReference type="GO" id="GO:0005886">
    <property type="term" value="C:plasma membrane"/>
    <property type="evidence" value="ECO:0007669"/>
    <property type="project" value="UniProtKB-SubCell"/>
</dbReference>
<dbReference type="HAMAP" id="MF_00386">
    <property type="entry name" value="UPF0161_YidD"/>
    <property type="match status" value="1"/>
</dbReference>
<dbReference type="InterPro" id="IPR002696">
    <property type="entry name" value="Membr_insert_effic_factor_YidD"/>
</dbReference>
<dbReference type="NCBIfam" id="TIGR00278">
    <property type="entry name" value="membrane protein insertion efficiency factor YidD"/>
    <property type="match status" value="1"/>
</dbReference>
<dbReference type="PANTHER" id="PTHR33383">
    <property type="entry name" value="MEMBRANE PROTEIN INSERTION EFFICIENCY FACTOR-RELATED"/>
    <property type="match status" value="1"/>
</dbReference>
<dbReference type="PANTHER" id="PTHR33383:SF1">
    <property type="entry name" value="MEMBRANE PROTEIN INSERTION EFFICIENCY FACTOR-RELATED"/>
    <property type="match status" value="1"/>
</dbReference>
<dbReference type="Pfam" id="PF01809">
    <property type="entry name" value="YidD"/>
    <property type="match status" value="1"/>
</dbReference>
<dbReference type="SMART" id="SM01234">
    <property type="entry name" value="Haemolytic"/>
    <property type="match status" value="1"/>
</dbReference>
<evidence type="ECO:0000255" key="1">
    <source>
        <dbReference type="HAMAP-Rule" id="MF_00386"/>
    </source>
</evidence>
<sequence length="68" mass="7845">MQEMLIKLIKIYQKATFFKPASCRFYPSCSNYSIEALRKYGIVKGGWLTVKRLARCHPYNPGGYDPVP</sequence>
<keyword id="KW-1003">Cell membrane</keyword>
<keyword id="KW-0472">Membrane</keyword>
<keyword id="KW-1185">Reference proteome</keyword>